<dbReference type="EC" id="6.3.4.19" evidence="1"/>
<dbReference type="EMBL" id="CP000051">
    <property type="protein sequence ID" value="AAX51123.1"/>
    <property type="molecule type" value="Genomic_DNA"/>
</dbReference>
<dbReference type="RefSeq" id="WP_009872227.1">
    <property type="nucleotide sequence ID" value="NC_007429.1"/>
</dbReference>
<dbReference type="SMR" id="Q3KKJ9"/>
<dbReference type="KEGG" id="cta:CTA_0916"/>
<dbReference type="HOGENOM" id="CLU_870675_0_0_0"/>
<dbReference type="Proteomes" id="UP000002532">
    <property type="component" value="Chromosome"/>
</dbReference>
<dbReference type="GO" id="GO:0005737">
    <property type="term" value="C:cytoplasm"/>
    <property type="evidence" value="ECO:0007669"/>
    <property type="project" value="UniProtKB-SubCell"/>
</dbReference>
<dbReference type="GO" id="GO:0005524">
    <property type="term" value="F:ATP binding"/>
    <property type="evidence" value="ECO:0007669"/>
    <property type="project" value="UniProtKB-UniRule"/>
</dbReference>
<dbReference type="GO" id="GO:0032267">
    <property type="term" value="F:tRNA(Ile)-lysidine synthase activity"/>
    <property type="evidence" value="ECO:0007669"/>
    <property type="project" value="UniProtKB-EC"/>
</dbReference>
<dbReference type="GO" id="GO:0006400">
    <property type="term" value="P:tRNA modification"/>
    <property type="evidence" value="ECO:0007669"/>
    <property type="project" value="UniProtKB-UniRule"/>
</dbReference>
<dbReference type="CDD" id="cd01992">
    <property type="entry name" value="TilS_N"/>
    <property type="match status" value="1"/>
</dbReference>
<dbReference type="Gene3D" id="3.40.50.620">
    <property type="entry name" value="HUPs"/>
    <property type="match status" value="1"/>
</dbReference>
<dbReference type="HAMAP" id="MF_01161">
    <property type="entry name" value="tRNA_Ile_lys_synt"/>
    <property type="match status" value="1"/>
</dbReference>
<dbReference type="InterPro" id="IPR014729">
    <property type="entry name" value="Rossmann-like_a/b/a_fold"/>
</dbReference>
<dbReference type="InterPro" id="IPR011063">
    <property type="entry name" value="TilS/TtcA_N"/>
</dbReference>
<dbReference type="InterPro" id="IPR012094">
    <property type="entry name" value="tRNA_Ile_lys_synt"/>
</dbReference>
<dbReference type="InterPro" id="IPR012795">
    <property type="entry name" value="tRNA_Ile_lys_synt_N"/>
</dbReference>
<dbReference type="NCBIfam" id="TIGR02432">
    <property type="entry name" value="lysidine_TilS_N"/>
    <property type="match status" value="1"/>
</dbReference>
<dbReference type="PANTHER" id="PTHR43033">
    <property type="entry name" value="TRNA(ILE)-LYSIDINE SYNTHASE-RELATED"/>
    <property type="match status" value="1"/>
</dbReference>
<dbReference type="PANTHER" id="PTHR43033:SF1">
    <property type="entry name" value="TRNA(ILE)-LYSIDINE SYNTHASE-RELATED"/>
    <property type="match status" value="1"/>
</dbReference>
<dbReference type="Pfam" id="PF01171">
    <property type="entry name" value="ATP_bind_3"/>
    <property type="match status" value="1"/>
</dbReference>
<dbReference type="SUPFAM" id="SSF52402">
    <property type="entry name" value="Adenine nucleotide alpha hydrolases-like"/>
    <property type="match status" value="1"/>
</dbReference>
<protein>
    <recommendedName>
        <fullName evidence="1">tRNA(Ile)-lysidine synthase</fullName>
        <ecNumber evidence="1">6.3.4.19</ecNumber>
    </recommendedName>
    <alternativeName>
        <fullName evidence="1">tRNA(Ile)-2-lysyl-cytidine synthase</fullName>
    </alternativeName>
    <alternativeName>
        <fullName evidence="1">tRNA(Ile)-lysidine synthetase</fullName>
    </alternativeName>
</protein>
<organism>
    <name type="scientific">Chlamydia trachomatis serovar A (strain ATCC VR-571B / DSM 19440 / HAR-13)</name>
    <dbReference type="NCBI Taxonomy" id="315277"/>
    <lineage>
        <taxon>Bacteria</taxon>
        <taxon>Pseudomonadati</taxon>
        <taxon>Chlamydiota</taxon>
        <taxon>Chlamydiia</taxon>
        <taxon>Chlamydiales</taxon>
        <taxon>Chlamydiaceae</taxon>
        <taxon>Chlamydia/Chlamydophila group</taxon>
        <taxon>Chlamydia</taxon>
    </lineage>
</organism>
<feature type="chain" id="PRO_1000213708" description="tRNA(Ile)-lysidine synthase">
    <location>
        <begin position="1"/>
        <end position="321"/>
    </location>
</feature>
<feature type="binding site" evidence="1">
    <location>
        <begin position="30"/>
        <end position="35"/>
    </location>
    <ligand>
        <name>ATP</name>
        <dbReference type="ChEBI" id="CHEBI:30616"/>
    </ligand>
</feature>
<proteinExistence type="inferred from homology"/>
<gene>
    <name evidence="1" type="primary">tilS</name>
    <name type="ordered locus">CTA_0916</name>
</gene>
<name>TILS_CHLTA</name>
<reference key="1">
    <citation type="journal article" date="2005" name="Infect. Immun.">
        <title>Comparative genomic analysis of Chlamydia trachomatis oculotropic and genitotropic strains.</title>
        <authorList>
            <person name="Carlson J.H."/>
            <person name="Porcella S.F."/>
            <person name="McClarty G."/>
            <person name="Caldwell H.D."/>
        </authorList>
    </citation>
    <scope>NUCLEOTIDE SEQUENCE [LARGE SCALE GENOMIC DNA]</scope>
    <source>
        <strain>ATCC VR-571B / DSM 19440 / HAR-13</strain>
    </source>
</reference>
<evidence type="ECO:0000255" key="1">
    <source>
        <dbReference type="HAMAP-Rule" id="MF_01161"/>
    </source>
</evidence>
<comment type="function">
    <text evidence="1">Ligates lysine onto the cytidine present at position 34 of the AUA codon-specific tRNA(Ile) that contains the anticodon CAU, in an ATP-dependent manner. Cytidine is converted to lysidine, thus changing the amino acid specificity of the tRNA from methionine to isoleucine.</text>
</comment>
<comment type="catalytic activity">
    <reaction evidence="1">
        <text>cytidine(34) in tRNA(Ile2) + L-lysine + ATP = lysidine(34) in tRNA(Ile2) + AMP + diphosphate + H(+)</text>
        <dbReference type="Rhea" id="RHEA:43744"/>
        <dbReference type="Rhea" id="RHEA-COMP:10625"/>
        <dbReference type="Rhea" id="RHEA-COMP:10670"/>
        <dbReference type="ChEBI" id="CHEBI:15378"/>
        <dbReference type="ChEBI" id="CHEBI:30616"/>
        <dbReference type="ChEBI" id="CHEBI:32551"/>
        <dbReference type="ChEBI" id="CHEBI:33019"/>
        <dbReference type="ChEBI" id="CHEBI:82748"/>
        <dbReference type="ChEBI" id="CHEBI:83665"/>
        <dbReference type="ChEBI" id="CHEBI:456215"/>
        <dbReference type="EC" id="6.3.4.19"/>
    </reaction>
</comment>
<comment type="subcellular location">
    <subcellularLocation>
        <location evidence="1">Cytoplasm</location>
    </subcellularLocation>
</comment>
<comment type="domain">
    <text>The N-terminal region contains the highly conserved SGGXDS motif, predicted to be a P-loop motif involved in ATP binding.</text>
</comment>
<comment type="similarity">
    <text evidence="1">Belongs to the tRNA(Ile)-lysidine synthase family.</text>
</comment>
<keyword id="KW-0067">ATP-binding</keyword>
<keyword id="KW-0963">Cytoplasm</keyword>
<keyword id="KW-0436">Ligase</keyword>
<keyword id="KW-0547">Nucleotide-binding</keyword>
<keyword id="KW-0819">tRNA processing</keyword>
<sequence length="321" mass="37342">MITRLFENDKQLEGFFSSLDKKKKYLLALSGGSDSLFLMYLLKSRAIFFTAVHVDYGWRETSYQEASDLAALCEQEQIPFILDRPEATDPMDSRDIENAARRYRYELFYRLCKEKCFSGVFLGHHADDQAETILKRVFEGAHLGNLKGMSAQVMYRDVALLRPLLHIPKHKIVEALDSHQVQYVQDITNCNERFLRARMRERLFPYLQDVFGKNIRDPLLSLAGDSAELREYLDQQTAPFLLRVVDNERGKLLPIEQELLKTPFLAKWVCKQFFLNERLVASKSFLQTVYDHLMTGSTARLRLRNRTVLVKARGVIIESIY</sequence>
<accession>Q3KKJ9</accession>